<keyword id="KW-0378">Hydrolase</keyword>
<keyword id="KW-0479">Metal-binding</keyword>
<keyword id="KW-0546">Nucleotide metabolism</keyword>
<keyword id="KW-1185">Reference proteome</keyword>
<keyword id="KW-0862">Zinc</keyword>
<comment type="function">
    <text evidence="1">Catalyzes the hydrolytic deamination of adenosine and 2-deoxyadenosine.</text>
</comment>
<comment type="catalytic activity">
    <reaction evidence="1">
        <text>adenosine + H2O + H(+) = inosine + NH4(+)</text>
        <dbReference type="Rhea" id="RHEA:24408"/>
        <dbReference type="ChEBI" id="CHEBI:15377"/>
        <dbReference type="ChEBI" id="CHEBI:15378"/>
        <dbReference type="ChEBI" id="CHEBI:16335"/>
        <dbReference type="ChEBI" id="CHEBI:17596"/>
        <dbReference type="ChEBI" id="CHEBI:28938"/>
        <dbReference type="EC" id="3.5.4.4"/>
    </reaction>
    <physiologicalReaction direction="left-to-right" evidence="1">
        <dbReference type="Rhea" id="RHEA:24409"/>
    </physiologicalReaction>
</comment>
<comment type="catalytic activity">
    <reaction evidence="1">
        <text>2'-deoxyadenosine + H2O + H(+) = 2'-deoxyinosine + NH4(+)</text>
        <dbReference type="Rhea" id="RHEA:28190"/>
        <dbReference type="ChEBI" id="CHEBI:15377"/>
        <dbReference type="ChEBI" id="CHEBI:15378"/>
        <dbReference type="ChEBI" id="CHEBI:17256"/>
        <dbReference type="ChEBI" id="CHEBI:28938"/>
        <dbReference type="ChEBI" id="CHEBI:28997"/>
        <dbReference type="EC" id="3.5.4.4"/>
    </reaction>
    <physiologicalReaction direction="left-to-right" evidence="1">
        <dbReference type="Rhea" id="RHEA:28191"/>
    </physiologicalReaction>
</comment>
<comment type="cofactor">
    <cofactor evidence="1">
        <name>Zn(2+)</name>
        <dbReference type="ChEBI" id="CHEBI:29105"/>
    </cofactor>
    <text evidence="1">Binds 1 zinc ion per subunit.</text>
</comment>
<comment type="similarity">
    <text evidence="1">Belongs to the metallo-dependent hydrolases superfamily. Adenosine and AMP deaminases family. Adenosine deaminase subfamily.</text>
</comment>
<gene>
    <name evidence="1" type="primary">add</name>
    <name type="ordered locus">CKL_0833</name>
</gene>
<dbReference type="EC" id="3.5.4.4" evidence="1"/>
<dbReference type="EMBL" id="CP000673">
    <property type="protein sequence ID" value="EDK32886.1"/>
    <property type="molecule type" value="Genomic_DNA"/>
</dbReference>
<dbReference type="RefSeq" id="WP_011989401.1">
    <property type="nucleotide sequence ID" value="NC_009706.1"/>
</dbReference>
<dbReference type="SMR" id="A5N6F5"/>
<dbReference type="STRING" id="431943.CKL_0833"/>
<dbReference type="KEGG" id="ckl:CKL_0833"/>
<dbReference type="eggNOG" id="COG1816">
    <property type="taxonomic scope" value="Bacteria"/>
</dbReference>
<dbReference type="HOGENOM" id="CLU_039228_0_0_9"/>
<dbReference type="Proteomes" id="UP000002411">
    <property type="component" value="Chromosome"/>
</dbReference>
<dbReference type="GO" id="GO:0005829">
    <property type="term" value="C:cytosol"/>
    <property type="evidence" value="ECO:0007669"/>
    <property type="project" value="TreeGrafter"/>
</dbReference>
<dbReference type="GO" id="GO:0046936">
    <property type="term" value="F:2'-deoxyadenosine deaminase activity"/>
    <property type="evidence" value="ECO:0007669"/>
    <property type="project" value="RHEA"/>
</dbReference>
<dbReference type="GO" id="GO:0004000">
    <property type="term" value="F:adenosine deaminase activity"/>
    <property type="evidence" value="ECO:0007669"/>
    <property type="project" value="UniProtKB-UniRule"/>
</dbReference>
<dbReference type="GO" id="GO:0008270">
    <property type="term" value="F:zinc ion binding"/>
    <property type="evidence" value="ECO:0007669"/>
    <property type="project" value="UniProtKB-UniRule"/>
</dbReference>
<dbReference type="GO" id="GO:0006154">
    <property type="term" value="P:adenosine catabolic process"/>
    <property type="evidence" value="ECO:0007669"/>
    <property type="project" value="TreeGrafter"/>
</dbReference>
<dbReference type="GO" id="GO:0043103">
    <property type="term" value="P:hypoxanthine salvage"/>
    <property type="evidence" value="ECO:0007669"/>
    <property type="project" value="TreeGrafter"/>
</dbReference>
<dbReference type="GO" id="GO:0046103">
    <property type="term" value="P:inosine biosynthetic process"/>
    <property type="evidence" value="ECO:0007669"/>
    <property type="project" value="TreeGrafter"/>
</dbReference>
<dbReference type="GO" id="GO:0009117">
    <property type="term" value="P:nucleotide metabolic process"/>
    <property type="evidence" value="ECO:0007669"/>
    <property type="project" value="UniProtKB-KW"/>
</dbReference>
<dbReference type="GO" id="GO:0009168">
    <property type="term" value="P:purine ribonucleoside monophosphate biosynthetic process"/>
    <property type="evidence" value="ECO:0007669"/>
    <property type="project" value="UniProtKB-UniRule"/>
</dbReference>
<dbReference type="CDD" id="cd01320">
    <property type="entry name" value="ADA"/>
    <property type="match status" value="1"/>
</dbReference>
<dbReference type="Gene3D" id="3.20.20.140">
    <property type="entry name" value="Metal-dependent hydrolases"/>
    <property type="match status" value="1"/>
</dbReference>
<dbReference type="HAMAP" id="MF_00540">
    <property type="entry name" value="A_deaminase"/>
    <property type="match status" value="1"/>
</dbReference>
<dbReference type="InterPro" id="IPR028893">
    <property type="entry name" value="A_deaminase"/>
</dbReference>
<dbReference type="InterPro" id="IPR001365">
    <property type="entry name" value="A_deaminase_dom"/>
</dbReference>
<dbReference type="InterPro" id="IPR006330">
    <property type="entry name" value="Ado/ade_deaminase"/>
</dbReference>
<dbReference type="InterPro" id="IPR032466">
    <property type="entry name" value="Metal_Hydrolase"/>
</dbReference>
<dbReference type="NCBIfam" id="TIGR01430">
    <property type="entry name" value="aden_deam"/>
    <property type="match status" value="1"/>
</dbReference>
<dbReference type="PANTHER" id="PTHR11409">
    <property type="entry name" value="ADENOSINE DEAMINASE"/>
    <property type="match status" value="1"/>
</dbReference>
<dbReference type="PANTHER" id="PTHR11409:SF43">
    <property type="entry name" value="ADENOSINE DEAMINASE"/>
    <property type="match status" value="1"/>
</dbReference>
<dbReference type="Pfam" id="PF00962">
    <property type="entry name" value="A_deaminase"/>
    <property type="match status" value="1"/>
</dbReference>
<dbReference type="SUPFAM" id="SSF51556">
    <property type="entry name" value="Metallo-dependent hydrolases"/>
    <property type="match status" value="1"/>
</dbReference>
<protein>
    <recommendedName>
        <fullName evidence="1">Adenosine deaminase</fullName>
        <ecNumber evidence="1">3.5.4.4</ecNumber>
    </recommendedName>
    <alternativeName>
        <fullName evidence="1">Adenosine aminohydrolase</fullName>
    </alternativeName>
</protein>
<sequence length="348" mass="39715">MNLNKILKLIPKTDLHCHLDGSLRPETILDIAYKENIPLPNKELANFQEEIKVIGKCTSLKEYLNKFNLPIQIMQKEEHIYRVTLELLEDALKQNIKYIEIRFAPFNHLKDGLTLDQVINTVLTAMNYGRTHLNIMSNLILCILRQEPVEKGIELVNTAKKYVGKGVVAVDLAGNESDFPPEIHEEAFTLARKYGLHRTVHAGETGLPENIIKSINILGAERIGHGTYAYKDKEIITCLKENRIPLEVCITSNVNTSAVTSYQEHPIKKYLDEDLIITVNTDNTTVSNTNLIEEFNYLIKYQSFRFDDIKKVIKNGIESSFASKEDINKLYEEYLSAINVIELTNPIL</sequence>
<proteinExistence type="inferred from homology"/>
<reference key="1">
    <citation type="journal article" date="2008" name="Proc. Natl. Acad. Sci. U.S.A.">
        <title>The genome of Clostridium kluyveri, a strict anaerobe with unique metabolic features.</title>
        <authorList>
            <person name="Seedorf H."/>
            <person name="Fricke W.F."/>
            <person name="Veith B."/>
            <person name="Brueggemann H."/>
            <person name="Liesegang H."/>
            <person name="Strittmatter A."/>
            <person name="Miethke M."/>
            <person name="Buckel W."/>
            <person name="Hinderberger J."/>
            <person name="Li F."/>
            <person name="Hagemeier C."/>
            <person name="Thauer R.K."/>
            <person name="Gottschalk G."/>
        </authorList>
    </citation>
    <scope>NUCLEOTIDE SEQUENCE [LARGE SCALE GENOMIC DNA]</scope>
    <source>
        <strain>ATCC 8527 / DSM 555 / NBRC 12016 / NCIMB 10680 / K1</strain>
    </source>
</reference>
<name>ADD_CLOK5</name>
<organism>
    <name type="scientific">Clostridium kluyveri (strain ATCC 8527 / DSM 555 / NBRC 12016 / NCIMB 10680 / K1)</name>
    <dbReference type="NCBI Taxonomy" id="431943"/>
    <lineage>
        <taxon>Bacteria</taxon>
        <taxon>Bacillati</taxon>
        <taxon>Bacillota</taxon>
        <taxon>Clostridia</taxon>
        <taxon>Eubacteriales</taxon>
        <taxon>Clostridiaceae</taxon>
        <taxon>Clostridium</taxon>
    </lineage>
</organism>
<feature type="chain" id="PRO_1000081922" description="Adenosine deaminase">
    <location>
        <begin position="1"/>
        <end position="348"/>
    </location>
</feature>
<feature type="active site" description="Proton donor" evidence="1">
    <location>
        <position position="204"/>
    </location>
</feature>
<feature type="binding site" evidence="1">
    <location>
        <position position="16"/>
    </location>
    <ligand>
        <name>Zn(2+)</name>
        <dbReference type="ChEBI" id="CHEBI:29105"/>
        <note>catalytic</note>
    </ligand>
</feature>
<feature type="binding site" evidence="1">
    <location>
        <position position="18"/>
    </location>
    <ligand>
        <name>substrate</name>
    </ligand>
</feature>
<feature type="binding site" evidence="1">
    <location>
        <position position="18"/>
    </location>
    <ligand>
        <name>Zn(2+)</name>
        <dbReference type="ChEBI" id="CHEBI:29105"/>
        <note>catalytic</note>
    </ligand>
</feature>
<feature type="binding site" evidence="1">
    <location>
        <position position="20"/>
    </location>
    <ligand>
        <name>substrate</name>
    </ligand>
</feature>
<feature type="binding site" evidence="1">
    <location>
        <position position="174"/>
    </location>
    <ligand>
        <name>substrate</name>
    </ligand>
</feature>
<feature type="binding site" evidence="1">
    <location>
        <position position="201"/>
    </location>
    <ligand>
        <name>Zn(2+)</name>
        <dbReference type="ChEBI" id="CHEBI:29105"/>
        <note>catalytic</note>
    </ligand>
</feature>
<feature type="binding site" evidence="1">
    <location>
        <position position="282"/>
    </location>
    <ligand>
        <name>Zn(2+)</name>
        <dbReference type="ChEBI" id="CHEBI:29105"/>
        <note>catalytic</note>
    </ligand>
</feature>
<feature type="site" description="Important for catalytic activity" evidence="1">
    <location>
        <position position="225"/>
    </location>
</feature>
<accession>A5N6F5</accession>
<evidence type="ECO:0000255" key="1">
    <source>
        <dbReference type="HAMAP-Rule" id="MF_00540"/>
    </source>
</evidence>